<reference key="1">
    <citation type="journal article" date="2000" name="Nature">
        <title>The complete sequence of the mucosal pathogen Ureaplasma urealyticum.</title>
        <authorList>
            <person name="Glass J.I."/>
            <person name="Lefkowitz E.J."/>
            <person name="Glass J.S."/>
            <person name="Heiner C.R."/>
            <person name="Chen E.Y."/>
            <person name="Cassell G.H."/>
        </authorList>
    </citation>
    <scope>NUCLEOTIDE SEQUENCE [LARGE SCALE GENOMIC DNA]</scope>
    <source>
        <strain>ATCC 700970</strain>
    </source>
</reference>
<comment type="function">
    <text evidence="1">One of the primary rRNA binding proteins, it binds directly near the 3'-end of the 23S rRNA, where it nucleates assembly of the 50S subunit.</text>
</comment>
<comment type="subunit">
    <text evidence="1">Part of the 50S ribosomal subunit. Forms a cluster with proteins L14 and L19.</text>
</comment>
<comment type="similarity">
    <text evidence="1">Belongs to the universal ribosomal protein uL3 family.</text>
</comment>
<evidence type="ECO:0000255" key="1">
    <source>
        <dbReference type="HAMAP-Rule" id="MF_01325"/>
    </source>
</evidence>
<evidence type="ECO:0000305" key="2"/>
<accession>Q9PQR0</accession>
<organism>
    <name type="scientific">Ureaplasma parvum serovar 3 (strain ATCC 700970)</name>
    <dbReference type="NCBI Taxonomy" id="273119"/>
    <lineage>
        <taxon>Bacteria</taxon>
        <taxon>Bacillati</taxon>
        <taxon>Mycoplasmatota</taxon>
        <taxon>Mycoplasmoidales</taxon>
        <taxon>Mycoplasmoidaceae</taxon>
        <taxon>Ureaplasma</taxon>
    </lineage>
</organism>
<gene>
    <name evidence="1" type="primary">rplC</name>
    <name evidence="1" type="synonym">rpl3</name>
    <name type="ordered locus">UU231</name>
</gene>
<protein>
    <recommendedName>
        <fullName evidence="1">Large ribosomal subunit protein uL3</fullName>
    </recommendedName>
    <alternativeName>
        <fullName evidence="2">50S ribosomal protein L3</fullName>
    </alternativeName>
</protein>
<name>RL3_UREPA</name>
<dbReference type="EMBL" id="AF222894">
    <property type="protein sequence ID" value="AAF30640.1"/>
    <property type="molecule type" value="Genomic_DNA"/>
</dbReference>
<dbReference type="RefSeq" id="WP_006688934.1">
    <property type="nucleotide sequence ID" value="NC_002162.1"/>
</dbReference>
<dbReference type="SMR" id="Q9PQR0"/>
<dbReference type="STRING" id="273119.UU231"/>
<dbReference type="EnsemblBacteria" id="AAF30640">
    <property type="protein sequence ID" value="AAF30640"/>
    <property type="gene ID" value="UU231"/>
</dbReference>
<dbReference type="GeneID" id="29672579"/>
<dbReference type="KEGG" id="uur:UU231"/>
<dbReference type="eggNOG" id="COG0087">
    <property type="taxonomic scope" value="Bacteria"/>
</dbReference>
<dbReference type="HOGENOM" id="CLU_044142_4_0_14"/>
<dbReference type="OrthoDB" id="9806135at2"/>
<dbReference type="Proteomes" id="UP000000423">
    <property type="component" value="Chromosome"/>
</dbReference>
<dbReference type="GO" id="GO:0022625">
    <property type="term" value="C:cytosolic large ribosomal subunit"/>
    <property type="evidence" value="ECO:0007669"/>
    <property type="project" value="TreeGrafter"/>
</dbReference>
<dbReference type="GO" id="GO:0019843">
    <property type="term" value="F:rRNA binding"/>
    <property type="evidence" value="ECO:0007669"/>
    <property type="project" value="UniProtKB-UniRule"/>
</dbReference>
<dbReference type="GO" id="GO:0003735">
    <property type="term" value="F:structural constituent of ribosome"/>
    <property type="evidence" value="ECO:0007669"/>
    <property type="project" value="InterPro"/>
</dbReference>
<dbReference type="GO" id="GO:0006412">
    <property type="term" value="P:translation"/>
    <property type="evidence" value="ECO:0007669"/>
    <property type="project" value="UniProtKB-UniRule"/>
</dbReference>
<dbReference type="FunFam" id="2.40.30.10:FF:000004">
    <property type="entry name" value="50S ribosomal protein L3"/>
    <property type="match status" value="1"/>
</dbReference>
<dbReference type="FunFam" id="3.30.160.810:FF:000001">
    <property type="entry name" value="50S ribosomal protein L3"/>
    <property type="match status" value="1"/>
</dbReference>
<dbReference type="Gene3D" id="3.30.160.810">
    <property type="match status" value="1"/>
</dbReference>
<dbReference type="Gene3D" id="2.40.30.10">
    <property type="entry name" value="Translation factors"/>
    <property type="match status" value="1"/>
</dbReference>
<dbReference type="HAMAP" id="MF_01325_B">
    <property type="entry name" value="Ribosomal_uL3_B"/>
    <property type="match status" value="1"/>
</dbReference>
<dbReference type="InterPro" id="IPR000597">
    <property type="entry name" value="Ribosomal_uL3"/>
</dbReference>
<dbReference type="InterPro" id="IPR019927">
    <property type="entry name" value="Ribosomal_uL3_bac/org-type"/>
</dbReference>
<dbReference type="InterPro" id="IPR019926">
    <property type="entry name" value="Ribosomal_uL3_CS"/>
</dbReference>
<dbReference type="InterPro" id="IPR009000">
    <property type="entry name" value="Transl_B-barrel_sf"/>
</dbReference>
<dbReference type="NCBIfam" id="TIGR03625">
    <property type="entry name" value="L3_bact"/>
    <property type="match status" value="1"/>
</dbReference>
<dbReference type="PANTHER" id="PTHR11229">
    <property type="entry name" value="50S RIBOSOMAL PROTEIN L3"/>
    <property type="match status" value="1"/>
</dbReference>
<dbReference type="PANTHER" id="PTHR11229:SF16">
    <property type="entry name" value="LARGE RIBOSOMAL SUBUNIT PROTEIN UL3C"/>
    <property type="match status" value="1"/>
</dbReference>
<dbReference type="Pfam" id="PF00297">
    <property type="entry name" value="Ribosomal_L3"/>
    <property type="match status" value="1"/>
</dbReference>
<dbReference type="SUPFAM" id="SSF50447">
    <property type="entry name" value="Translation proteins"/>
    <property type="match status" value="1"/>
</dbReference>
<dbReference type="PROSITE" id="PS00474">
    <property type="entry name" value="RIBOSOMAL_L3"/>
    <property type="match status" value="1"/>
</dbReference>
<sequence length="233" mass="24994">MKSLLGTKVGMTQVFTETGKAVAATVIYVEPNKVLAVKTNEKDGYSAIQIGYETVKEKALNKPLLGQFKKANSDPKRHIKEFRDVVAEVGAELTVSEFEPGQLVNAQAYTKGHGFTGSIKRHNFSMGPMGHGAGYPHRYVGSIAKGRGGSQAQRVFKGTKLPGHYGHELVTTKNLLVLDVKANENLILIKGAIPGPKGSIVLLKSAKKVGHIVSDPQVVNYLANKASSSEANE</sequence>
<proteinExistence type="inferred from homology"/>
<feature type="chain" id="PRO_0000077185" description="Large ribosomal subunit protein uL3">
    <location>
        <begin position="1"/>
        <end position="233"/>
    </location>
</feature>
<keyword id="KW-1185">Reference proteome</keyword>
<keyword id="KW-0687">Ribonucleoprotein</keyword>
<keyword id="KW-0689">Ribosomal protein</keyword>
<keyword id="KW-0694">RNA-binding</keyword>
<keyword id="KW-0699">rRNA-binding</keyword>